<dbReference type="EC" id="1.1.1.86" evidence="1"/>
<dbReference type="EMBL" id="CP001197">
    <property type="protein sequence ID" value="ACL07116.1"/>
    <property type="molecule type" value="Genomic_DNA"/>
</dbReference>
<dbReference type="SMR" id="B8DNQ9"/>
<dbReference type="STRING" id="883.DvMF_0155"/>
<dbReference type="KEGG" id="dvm:DvMF_0155"/>
<dbReference type="eggNOG" id="COG0059">
    <property type="taxonomic scope" value="Bacteria"/>
</dbReference>
<dbReference type="HOGENOM" id="CLU_033821_0_1_7"/>
<dbReference type="OrthoDB" id="9804088at2"/>
<dbReference type="UniPathway" id="UPA00047">
    <property type="reaction ID" value="UER00056"/>
</dbReference>
<dbReference type="UniPathway" id="UPA00049">
    <property type="reaction ID" value="UER00060"/>
</dbReference>
<dbReference type="GO" id="GO:0005829">
    <property type="term" value="C:cytosol"/>
    <property type="evidence" value="ECO:0007669"/>
    <property type="project" value="TreeGrafter"/>
</dbReference>
<dbReference type="GO" id="GO:0004455">
    <property type="term" value="F:ketol-acid reductoisomerase activity"/>
    <property type="evidence" value="ECO:0007669"/>
    <property type="project" value="UniProtKB-UniRule"/>
</dbReference>
<dbReference type="GO" id="GO:0000287">
    <property type="term" value="F:magnesium ion binding"/>
    <property type="evidence" value="ECO:0007669"/>
    <property type="project" value="UniProtKB-UniRule"/>
</dbReference>
<dbReference type="GO" id="GO:0050661">
    <property type="term" value="F:NADP binding"/>
    <property type="evidence" value="ECO:0007669"/>
    <property type="project" value="InterPro"/>
</dbReference>
<dbReference type="GO" id="GO:0009097">
    <property type="term" value="P:isoleucine biosynthetic process"/>
    <property type="evidence" value="ECO:0007669"/>
    <property type="project" value="UniProtKB-UniRule"/>
</dbReference>
<dbReference type="GO" id="GO:0009099">
    <property type="term" value="P:L-valine biosynthetic process"/>
    <property type="evidence" value="ECO:0007669"/>
    <property type="project" value="UniProtKB-UniRule"/>
</dbReference>
<dbReference type="FunFam" id="3.40.50.720:FF:000023">
    <property type="entry name" value="Ketol-acid reductoisomerase (NADP(+))"/>
    <property type="match status" value="1"/>
</dbReference>
<dbReference type="Gene3D" id="6.10.240.10">
    <property type="match status" value="1"/>
</dbReference>
<dbReference type="Gene3D" id="3.40.50.720">
    <property type="entry name" value="NAD(P)-binding Rossmann-like Domain"/>
    <property type="match status" value="1"/>
</dbReference>
<dbReference type="HAMAP" id="MF_00435">
    <property type="entry name" value="IlvC"/>
    <property type="match status" value="1"/>
</dbReference>
<dbReference type="InterPro" id="IPR008927">
    <property type="entry name" value="6-PGluconate_DH-like_C_sf"/>
</dbReference>
<dbReference type="InterPro" id="IPR013023">
    <property type="entry name" value="KARI"/>
</dbReference>
<dbReference type="InterPro" id="IPR000506">
    <property type="entry name" value="KARI_C"/>
</dbReference>
<dbReference type="InterPro" id="IPR013116">
    <property type="entry name" value="KARI_N"/>
</dbReference>
<dbReference type="InterPro" id="IPR014359">
    <property type="entry name" value="KARI_prok"/>
</dbReference>
<dbReference type="InterPro" id="IPR036291">
    <property type="entry name" value="NAD(P)-bd_dom_sf"/>
</dbReference>
<dbReference type="NCBIfam" id="TIGR00465">
    <property type="entry name" value="ilvC"/>
    <property type="match status" value="1"/>
</dbReference>
<dbReference type="NCBIfam" id="NF004017">
    <property type="entry name" value="PRK05479.1"/>
    <property type="match status" value="1"/>
</dbReference>
<dbReference type="NCBIfam" id="NF009940">
    <property type="entry name" value="PRK13403.1"/>
    <property type="match status" value="1"/>
</dbReference>
<dbReference type="PANTHER" id="PTHR21371">
    <property type="entry name" value="KETOL-ACID REDUCTOISOMERASE, MITOCHONDRIAL"/>
    <property type="match status" value="1"/>
</dbReference>
<dbReference type="PANTHER" id="PTHR21371:SF1">
    <property type="entry name" value="KETOL-ACID REDUCTOISOMERASE, MITOCHONDRIAL"/>
    <property type="match status" value="1"/>
</dbReference>
<dbReference type="Pfam" id="PF01450">
    <property type="entry name" value="KARI_C"/>
    <property type="match status" value="1"/>
</dbReference>
<dbReference type="Pfam" id="PF07991">
    <property type="entry name" value="KARI_N"/>
    <property type="match status" value="1"/>
</dbReference>
<dbReference type="PIRSF" id="PIRSF000116">
    <property type="entry name" value="IlvC_gammaproteo"/>
    <property type="match status" value="1"/>
</dbReference>
<dbReference type="SUPFAM" id="SSF48179">
    <property type="entry name" value="6-phosphogluconate dehydrogenase C-terminal domain-like"/>
    <property type="match status" value="1"/>
</dbReference>
<dbReference type="SUPFAM" id="SSF51735">
    <property type="entry name" value="NAD(P)-binding Rossmann-fold domains"/>
    <property type="match status" value="1"/>
</dbReference>
<dbReference type="PROSITE" id="PS51851">
    <property type="entry name" value="KARI_C"/>
    <property type="match status" value="1"/>
</dbReference>
<dbReference type="PROSITE" id="PS51850">
    <property type="entry name" value="KARI_N"/>
    <property type="match status" value="1"/>
</dbReference>
<gene>
    <name evidence="1" type="primary">ilvC</name>
    <name type="ordered locus">DvMF_0155</name>
</gene>
<protein>
    <recommendedName>
        <fullName evidence="1">Ketol-acid reductoisomerase (NADP(+))</fullName>
        <shortName evidence="1">KARI</shortName>
        <ecNumber evidence="1">1.1.1.86</ecNumber>
    </recommendedName>
    <alternativeName>
        <fullName evidence="1">Acetohydroxy-acid isomeroreductase</fullName>
        <shortName evidence="1">AHIR</shortName>
    </alternativeName>
    <alternativeName>
        <fullName evidence="1">Alpha-keto-beta-hydroxylacyl reductoisomerase</fullName>
    </alternativeName>
    <alternativeName>
        <fullName evidence="1">Ketol-acid reductoisomerase type 1</fullName>
    </alternativeName>
    <alternativeName>
        <fullName evidence="1">Ketol-acid reductoisomerase type I</fullName>
    </alternativeName>
</protein>
<keyword id="KW-0028">Amino-acid biosynthesis</keyword>
<keyword id="KW-0100">Branched-chain amino acid biosynthesis</keyword>
<keyword id="KW-0460">Magnesium</keyword>
<keyword id="KW-0479">Metal-binding</keyword>
<keyword id="KW-0521">NADP</keyword>
<keyword id="KW-0560">Oxidoreductase</keyword>
<proteinExistence type="inferred from homology"/>
<accession>B8DNQ9</accession>
<comment type="function">
    <text evidence="1">Involved in the biosynthesis of branched-chain amino acids (BCAA). Catalyzes an alkyl-migration followed by a ketol-acid reduction of (S)-2-acetolactate (S2AL) to yield (R)-2,3-dihydroxy-isovalerate. In the isomerase reaction, S2AL is rearranged via a Mg-dependent methyl migration to produce 3-hydroxy-3-methyl-2-ketobutyrate (HMKB). In the reductase reaction, this 2-ketoacid undergoes a metal-dependent reduction by NADPH to yield (R)-2,3-dihydroxy-isovalerate.</text>
</comment>
<comment type="catalytic activity">
    <reaction evidence="1">
        <text>(2R)-2,3-dihydroxy-3-methylbutanoate + NADP(+) = (2S)-2-acetolactate + NADPH + H(+)</text>
        <dbReference type="Rhea" id="RHEA:22068"/>
        <dbReference type="ChEBI" id="CHEBI:15378"/>
        <dbReference type="ChEBI" id="CHEBI:49072"/>
        <dbReference type="ChEBI" id="CHEBI:57783"/>
        <dbReference type="ChEBI" id="CHEBI:58349"/>
        <dbReference type="ChEBI" id="CHEBI:58476"/>
        <dbReference type="EC" id="1.1.1.86"/>
    </reaction>
</comment>
<comment type="catalytic activity">
    <reaction evidence="1">
        <text>(2R,3R)-2,3-dihydroxy-3-methylpentanoate + NADP(+) = (S)-2-ethyl-2-hydroxy-3-oxobutanoate + NADPH + H(+)</text>
        <dbReference type="Rhea" id="RHEA:13493"/>
        <dbReference type="ChEBI" id="CHEBI:15378"/>
        <dbReference type="ChEBI" id="CHEBI:49256"/>
        <dbReference type="ChEBI" id="CHEBI:49258"/>
        <dbReference type="ChEBI" id="CHEBI:57783"/>
        <dbReference type="ChEBI" id="CHEBI:58349"/>
        <dbReference type="EC" id="1.1.1.86"/>
    </reaction>
</comment>
<comment type="cofactor">
    <cofactor evidence="1">
        <name>Mg(2+)</name>
        <dbReference type="ChEBI" id="CHEBI:18420"/>
    </cofactor>
    <text evidence="1">Binds 2 magnesium ions per subunit.</text>
</comment>
<comment type="pathway">
    <text evidence="1">Amino-acid biosynthesis; L-isoleucine biosynthesis; L-isoleucine from 2-oxobutanoate: step 2/4.</text>
</comment>
<comment type="pathway">
    <text evidence="1">Amino-acid biosynthesis; L-valine biosynthesis; L-valine from pyruvate: step 2/4.</text>
</comment>
<comment type="similarity">
    <text evidence="1">Belongs to the ketol-acid reductoisomerase family.</text>
</comment>
<name>ILVC_NITV9</name>
<organism>
    <name type="scientific">Nitratidesulfovibrio vulgaris (strain DSM 19637 / Miyazaki F)</name>
    <name type="common">Desulfovibrio vulgaris</name>
    <dbReference type="NCBI Taxonomy" id="883"/>
    <lineage>
        <taxon>Bacteria</taxon>
        <taxon>Pseudomonadati</taxon>
        <taxon>Thermodesulfobacteriota</taxon>
        <taxon>Desulfovibrionia</taxon>
        <taxon>Desulfovibrionales</taxon>
        <taxon>Desulfovibrionaceae</taxon>
        <taxon>Nitratidesulfovibrio</taxon>
    </lineage>
</organism>
<feature type="chain" id="PRO_1000190948" description="Ketol-acid reductoisomerase (NADP(+))">
    <location>
        <begin position="1"/>
        <end position="330"/>
    </location>
</feature>
<feature type="domain" description="KARI N-terminal Rossmann" evidence="2">
    <location>
        <begin position="1"/>
        <end position="181"/>
    </location>
</feature>
<feature type="domain" description="KARI C-terminal knotted" evidence="3">
    <location>
        <begin position="182"/>
        <end position="327"/>
    </location>
</feature>
<feature type="active site" evidence="1">
    <location>
        <position position="107"/>
    </location>
</feature>
<feature type="binding site" evidence="1">
    <location>
        <begin position="24"/>
        <end position="27"/>
    </location>
    <ligand>
        <name>NADP(+)</name>
        <dbReference type="ChEBI" id="CHEBI:58349"/>
    </ligand>
</feature>
<feature type="binding site" evidence="1">
    <location>
        <position position="47"/>
    </location>
    <ligand>
        <name>NADP(+)</name>
        <dbReference type="ChEBI" id="CHEBI:58349"/>
    </ligand>
</feature>
<feature type="binding site" evidence="1">
    <location>
        <begin position="82"/>
        <end position="85"/>
    </location>
    <ligand>
        <name>NADP(+)</name>
        <dbReference type="ChEBI" id="CHEBI:58349"/>
    </ligand>
</feature>
<feature type="binding site" evidence="1">
    <location>
        <position position="133"/>
    </location>
    <ligand>
        <name>NADP(+)</name>
        <dbReference type="ChEBI" id="CHEBI:58349"/>
    </ligand>
</feature>
<feature type="binding site" evidence="1">
    <location>
        <position position="190"/>
    </location>
    <ligand>
        <name>Mg(2+)</name>
        <dbReference type="ChEBI" id="CHEBI:18420"/>
        <label>1</label>
    </ligand>
</feature>
<feature type="binding site" evidence="1">
    <location>
        <position position="190"/>
    </location>
    <ligand>
        <name>Mg(2+)</name>
        <dbReference type="ChEBI" id="CHEBI:18420"/>
        <label>2</label>
    </ligand>
</feature>
<feature type="binding site" evidence="1">
    <location>
        <position position="194"/>
    </location>
    <ligand>
        <name>Mg(2+)</name>
        <dbReference type="ChEBI" id="CHEBI:18420"/>
        <label>1</label>
    </ligand>
</feature>
<feature type="binding site" evidence="1">
    <location>
        <position position="226"/>
    </location>
    <ligand>
        <name>Mg(2+)</name>
        <dbReference type="ChEBI" id="CHEBI:18420"/>
        <label>2</label>
    </ligand>
</feature>
<feature type="binding site" evidence="1">
    <location>
        <position position="230"/>
    </location>
    <ligand>
        <name>Mg(2+)</name>
        <dbReference type="ChEBI" id="CHEBI:18420"/>
        <label>2</label>
    </ligand>
</feature>
<feature type="binding site" evidence="1">
    <location>
        <position position="251"/>
    </location>
    <ligand>
        <name>substrate</name>
    </ligand>
</feature>
<reference key="1">
    <citation type="submission" date="2008-10" db="EMBL/GenBank/DDBJ databases">
        <title>Complete sequence of Desulfovibrio vulgaris str. 'Miyazaki F'.</title>
        <authorList>
            <person name="Lucas S."/>
            <person name="Copeland A."/>
            <person name="Lapidus A."/>
            <person name="Glavina del Rio T."/>
            <person name="Dalin E."/>
            <person name="Tice H."/>
            <person name="Bruce D."/>
            <person name="Goodwin L."/>
            <person name="Pitluck S."/>
            <person name="Sims D."/>
            <person name="Brettin T."/>
            <person name="Detter J.C."/>
            <person name="Han C."/>
            <person name="Larimer F."/>
            <person name="Land M."/>
            <person name="Hauser L."/>
            <person name="Kyrpides N."/>
            <person name="Mikhailova N."/>
            <person name="Hazen T.C."/>
            <person name="Richardson P."/>
        </authorList>
    </citation>
    <scope>NUCLEOTIDE SEQUENCE [LARGE SCALE GENOMIC DNA]</scope>
    <source>
        <strain>DSM 19637 / Miyazaki F</strain>
    </source>
</reference>
<sequence>MKVYYEQDATLEVLKDKTVAIIGYGSQGHAHAQNLRDSGINVVVGQRPGGANYELAKEHGFAPLPVAEAAAKADLIMILLPDQVQAAIYEAEIKPNLKPGDALLFAHGFNIHFGQIEPPKDVDVFMIAPKGPGHLVRRTYTEGGGVPCLVAIHQDATGKAMEKALAYAKGVGGARSGVIETTFKEETETDLFGEQAVLCGGLSSLIKAGFETLVEAGYQPEIAYFECLHEVKLIVDLIYEGGLAKMRHSISDTAEYGDYVTGRRIVNEETKKEMKKVLQEIQEGTFARNFILEAKAGYPGFKATRRIEADHQIEQVGGKLRGMMPWLHKK</sequence>
<evidence type="ECO:0000255" key="1">
    <source>
        <dbReference type="HAMAP-Rule" id="MF_00435"/>
    </source>
</evidence>
<evidence type="ECO:0000255" key="2">
    <source>
        <dbReference type="PROSITE-ProRule" id="PRU01197"/>
    </source>
</evidence>
<evidence type="ECO:0000255" key="3">
    <source>
        <dbReference type="PROSITE-ProRule" id="PRU01198"/>
    </source>
</evidence>